<sequence>MPKTRKYSTVDEEKILKVSLSLATKEDVLEWSHGEVTKPETINYKSYKPERHGLFDELIFGPATDYKCPICGKKYKKSNEGLTCNNTPQCEIEKPEILPKISRRSRMGHIALQTPVVHFWFFKIDNSIISKLLVLRVGESNEYVSKNDLENIIYYKSHIVLDNGGLKSLPKNKIININNAAQIYKDALIELRELNLNDADALEIIDGTINHLNDIVGSKVGNDYGVDFYELNEVIEEYSSAKIQTGSKAIEFLLENIDLEEEQRKIKSKIKEINNLEKTSSSRKQDLSKLYKRLQVVESFINSGQKPTSMLIYNLPVIPAELRPLVQLDGGRHSTSDINELYRRIIIRNNRLRKWIELNAPTLITQNELRMIQEAVDALIDNSKKKPKPVTSKDNRNLKSISDALTGKKGRFRQNLLGKRVDYSGRSVIVVGPELKMNQVGIPREMAAKLFEPWIIKELIDQEITLSVKSARKLIDNLNPIIWPHVAKVIQGRPVLLNRAPTLHRLSIQAFEPVLIRGKAIKLHPLVTTAFNADFDGDQMAVHVPISDEAVREAKELLFANRNILGPKDGEPIINPSQDMILGIYYLTIEIAGAKGEAKVFQDVNSMLRAYEEGSVSLHARVAIPFKKLQKTFNLKGDKGYIFSTVGKFIFNQAFPENFPFIFDSSVSSISDAQEYTKKYYIPYGLNIKETIQNTPINDALSKKDLSKIIRTIFDKYVPVLTKEDVASVINDVNHTNYKDTSTKFANLVTTNKTALEYIHAESLSKFTTKHFVDVNKKLSLKTPGNPNQPIWEVDQYVELLENVWFDYVNIVASVLDEIKDLGFKFSTKSGTSISIHDIEVSDNKKERIKEGDDYTSELKSMYREGLLTDDERYSLTINKWSEVKDNIQNDLKKIVKNNPLNPIFIMMNSGARSNMANYVQLAGIRGLMTNNTKILKSDAENERVVRSTVEIPVKSSFLDGLTAYEFYSSTHGARKGLTDTALNTAKSGYLTRRLVDVAQGIVVTEKDCATQNGFVVKDIVDNKTKTVIVPIRERIEGRFTIEDVKDKDGNVIVEKDTLIDAKMAEEIVEVHDVKEVNIRSILGCEAKNGVCQKCFGKDLATSRIVSIGEAVGITASQSIGEPGTQLTMRTFHSGGVAGVEDITGGFGRLTELIDAYRSPWGRPAIISKVDGIITEIKTPKDKNTNLVYITYLDQDDASQTEVVSVPKNRTLRVKVGDKIVKGQKIIDGPIILEELLEYGGPRKVQSYLLKEIQKIYRMQGIAINDKYIEIIISQMLSKIEISEPGDSDFIIGSLVNNLDFYNTNNELLEKGLEPAKGKVVIHGAKRIPLLSNSFLAAASYQESAKILVNSSISSQQDFLVGVKENIILGKKIPAGTNSQYESKSKFDIRDPKEYFKDKSPQRHYKIEMDNEVSDMFNEFRISQNK</sequence>
<accession>Q98Q24</accession>
<dbReference type="EC" id="2.7.7.6" evidence="1"/>
<dbReference type="EMBL" id="AL445565">
    <property type="protein sequence ID" value="CAC13718.1"/>
    <property type="molecule type" value="Genomic_DNA"/>
</dbReference>
<dbReference type="PIR" id="A99580">
    <property type="entry name" value="A99580"/>
</dbReference>
<dbReference type="RefSeq" id="WP_010925346.1">
    <property type="nucleotide sequence ID" value="NC_002771.1"/>
</dbReference>
<dbReference type="SMR" id="Q98Q24"/>
<dbReference type="STRING" id="272635.gene:17577147"/>
<dbReference type="KEGG" id="mpu:MYPU_5450"/>
<dbReference type="eggNOG" id="COG0086">
    <property type="taxonomic scope" value="Bacteria"/>
</dbReference>
<dbReference type="HOGENOM" id="CLU_000524_3_1_14"/>
<dbReference type="BioCyc" id="MPUL272635:G1GT6-553-MONOMER"/>
<dbReference type="Proteomes" id="UP000000528">
    <property type="component" value="Chromosome"/>
</dbReference>
<dbReference type="GO" id="GO:0000428">
    <property type="term" value="C:DNA-directed RNA polymerase complex"/>
    <property type="evidence" value="ECO:0007669"/>
    <property type="project" value="UniProtKB-KW"/>
</dbReference>
<dbReference type="GO" id="GO:0003677">
    <property type="term" value="F:DNA binding"/>
    <property type="evidence" value="ECO:0007669"/>
    <property type="project" value="UniProtKB-UniRule"/>
</dbReference>
<dbReference type="GO" id="GO:0003899">
    <property type="term" value="F:DNA-directed RNA polymerase activity"/>
    <property type="evidence" value="ECO:0007669"/>
    <property type="project" value="UniProtKB-UniRule"/>
</dbReference>
<dbReference type="GO" id="GO:0000287">
    <property type="term" value="F:magnesium ion binding"/>
    <property type="evidence" value="ECO:0007669"/>
    <property type="project" value="UniProtKB-UniRule"/>
</dbReference>
<dbReference type="GO" id="GO:0008270">
    <property type="term" value="F:zinc ion binding"/>
    <property type="evidence" value="ECO:0007669"/>
    <property type="project" value="UniProtKB-UniRule"/>
</dbReference>
<dbReference type="GO" id="GO:0006351">
    <property type="term" value="P:DNA-templated transcription"/>
    <property type="evidence" value="ECO:0007669"/>
    <property type="project" value="UniProtKB-UniRule"/>
</dbReference>
<dbReference type="CDD" id="cd02655">
    <property type="entry name" value="RNAP_beta'_C"/>
    <property type="match status" value="1"/>
</dbReference>
<dbReference type="CDD" id="cd01609">
    <property type="entry name" value="RNAP_beta'_N"/>
    <property type="match status" value="1"/>
</dbReference>
<dbReference type="Gene3D" id="1.10.132.30">
    <property type="match status" value="1"/>
</dbReference>
<dbReference type="Gene3D" id="1.10.150.390">
    <property type="match status" value="1"/>
</dbReference>
<dbReference type="Gene3D" id="1.10.1790.20">
    <property type="match status" value="1"/>
</dbReference>
<dbReference type="Gene3D" id="1.10.40.90">
    <property type="match status" value="1"/>
</dbReference>
<dbReference type="Gene3D" id="2.40.40.20">
    <property type="match status" value="1"/>
</dbReference>
<dbReference type="Gene3D" id="2.40.50.100">
    <property type="match status" value="1"/>
</dbReference>
<dbReference type="Gene3D" id="4.10.860.120">
    <property type="entry name" value="RNA polymerase II, clamp domain"/>
    <property type="match status" value="1"/>
</dbReference>
<dbReference type="Gene3D" id="1.10.274.100">
    <property type="entry name" value="RNA polymerase Rpb1, domain 3"/>
    <property type="match status" value="2"/>
</dbReference>
<dbReference type="HAMAP" id="MF_01322">
    <property type="entry name" value="RNApol_bact_RpoC"/>
    <property type="match status" value="1"/>
</dbReference>
<dbReference type="InterPro" id="IPR045867">
    <property type="entry name" value="DNA-dir_RpoC_beta_prime"/>
</dbReference>
<dbReference type="InterPro" id="IPR012754">
    <property type="entry name" value="DNA-dir_RpoC_beta_prime_bact"/>
</dbReference>
<dbReference type="InterPro" id="IPR000722">
    <property type="entry name" value="RNA_pol_asu"/>
</dbReference>
<dbReference type="InterPro" id="IPR006592">
    <property type="entry name" value="RNA_pol_N"/>
</dbReference>
<dbReference type="InterPro" id="IPR007080">
    <property type="entry name" value="RNA_pol_Rpb1_1"/>
</dbReference>
<dbReference type="InterPro" id="IPR007066">
    <property type="entry name" value="RNA_pol_Rpb1_3"/>
</dbReference>
<dbReference type="InterPro" id="IPR042102">
    <property type="entry name" value="RNA_pol_Rpb1_3_sf"/>
</dbReference>
<dbReference type="InterPro" id="IPR007083">
    <property type="entry name" value="RNA_pol_Rpb1_4"/>
</dbReference>
<dbReference type="InterPro" id="IPR007081">
    <property type="entry name" value="RNA_pol_Rpb1_5"/>
</dbReference>
<dbReference type="InterPro" id="IPR044893">
    <property type="entry name" value="RNA_pol_Rpb1_clamp_domain"/>
</dbReference>
<dbReference type="InterPro" id="IPR038120">
    <property type="entry name" value="Rpb1_funnel_sf"/>
</dbReference>
<dbReference type="PANTHER" id="PTHR19376">
    <property type="entry name" value="DNA-DIRECTED RNA POLYMERASE"/>
    <property type="match status" value="1"/>
</dbReference>
<dbReference type="PANTHER" id="PTHR19376:SF54">
    <property type="entry name" value="DNA-DIRECTED RNA POLYMERASE SUBUNIT BETA"/>
    <property type="match status" value="1"/>
</dbReference>
<dbReference type="Pfam" id="PF04997">
    <property type="entry name" value="RNA_pol_Rpb1_1"/>
    <property type="match status" value="1"/>
</dbReference>
<dbReference type="Pfam" id="PF00623">
    <property type="entry name" value="RNA_pol_Rpb1_2"/>
    <property type="match status" value="2"/>
</dbReference>
<dbReference type="Pfam" id="PF04983">
    <property type="entry name" value="RNA_pol_Rpb1_3"/>
    <property type="match status" value="1"/>
</dbReference>
<dbReference type="Pfam" id="PF05000">
    <property type="entry name" value="RNA_pol_Rpb1_4"/>
    <property type="match status" value="1"/>
</dbReference>
<dbReference type="Pfam" id="PF04998">
    <property type="entry name" value="RNA_pol_Rpb1_5"/>
    <property type="match status" value="1"/>
</dbReference>
<dbReference type="SMART" id="SM00663">
    <property type="entry name" value="RPOLA_N"/>
    <property type="match status" value="1"/>
</dbReference>
<dbReference type="SUPFAM" id="SSF64484">
    <property type="entry name" value="beta and beta-prime subunits of DNA dependent RNA-polymerase"/>
    <property type="match status" value="1"/>
</dbReference>
<organism>
    <name type="scientific">Mycoplasmopsis pulmonis (strain UAB CTIP)</name>
    <name type="common">Mycoplasma pulmonis</name>
    <dbReference type="NCBI Taxonomy" id="272635"/>
    <lineage>
        <taxon>Bacteria</taxon>
        <taxon>Bacillati</taxon>
        <taxon>Mycoplasmatota</taxon>
        <taxon>Mycoplasmoidales</taxon>
        <taxon>Metamycoplasmataceae</taxon>
        <taxon>Mycoplasmopsis</taxon>
    </lineage>
</organism>
<gene>
    <name evidence="1" type="primary">rpoC</name>
    <name type="ordered locus">MYPU_5450</name>
</gene>
<proteinExistence type="inferred from homology"/>
<evidence type="ECO:0000255" key="1">
    <source>
        <dbReference type="HAMAP-Rule" id="MF_01322"/>
    </source>
</evidence>
<evidence type="ECO:0000305" key="2"/>
<name>RPOC_MYCPU</name>
<reference key="1">
    <citation type="journal article" date="2001" name="Nucleic Acids Res.">
        <title>The complete genome sequence of the murine respiratory pathogen Mycoplasma pulmonis.</title>
        <authorList>
            <person name="Chambaud I."/>
            <person name="Heilig R."/>
            <person name="Ferris S."/>
            <person name="Barbe V."/>
            <person name="Samson D."/>
            <person name="Galisson F."/>
            <person name="Moszer I."/>
            <person name="Dybvig K."/>
            <person name="Wroblewski H."/>
            <person name="Viari A."/>
            <person name="Rocha E.P.C."/>
            <person name="Blanchard A."/>
        </authorList>
    </citation>
    <scope>NUCLEOTIDE SEQUENCE [LARGE SCALE GENOMIC DNA]</scope>
    <source>
        <strain>UAB CTIP</strain>
    </source>
</reference>
<comment type="function">
    <text evidence="1">DNA-dependent RNA polymerase catalyzes the transcription of DNA into RNA using the four ribonucleoside triphosphates as substrates.</text>
</comment>
<comment type="catalytic activity">
    <reaction evidence="1">
        <text>RNA(n) + a ribonucleoside 5'-triphosphate = RNA(n+1) + diphosphate</text>
        <dbReference type="Rhea" id="RHEA:21248"/>
        <dbReference type="Rhea" id="RHEA-COMP:14527"/>
        <dbReference type="Rhea" id="RHEA-COMP:17342"/>
        <dbReference type="ChEBI" id="CHEBI:33019"/>
        <dbReference type="ChEBI" id="CHEBI:61557"/>
        <dbReference type="ChEBI" id="CHEBI:140395"/>
        <dbReference type="EC" id="2.7.7.6"/>
    </reaction>
</comment>
<comment type="cofactor">
    <cofactor evidence="1">
        <name>Mg(2+)</name>
        <dbReference type="ChEBI" id="CHEBI:18420"/>
    </cofactor>
    <text evidence="1">Binds 1 Mg(2+) ion per subunit.</text>
</comment>
<comment type="cofactor">
    <cofactor evidence="1">
        <name>Zn(2+)</name>
        <dbReference type="ChEBI" id="CHEBI:29105"/>
    </cofactor>
    <text evidence="2">Binds 1 Zn(2+) ion per subunit; 2 are expected compared to other organisms.</text>
</comment>
<comment type="subunit">
    <text evidence="1">The RNAP catalytic core consists of 2 alpha, 1 beta, 1 beta' and 1 omega subunit. When a sigma factor is associated with the core the holoenzyme is formed, which can initiate transcription.</text>
</comment>
<comment type="similarity">
    <text evidence="1">Belongs to the RNA polymerase beta' chain family.</text>
</comment>
<comment type="caution">
    <text evidence="2">The highly conserved N-terminal zinc-binding site of this subunit is not present in this sequence.</text>
</comment>
<feature type="chain" id="PRO_0000067764" description="DNA-directed RNA polymerase subunit beta'">
    <location>
        <begin position="1"/>
        <end position="1426"/>
    </location>
</feature>
<feature type="binding site" evidence="1">
    <location>
        <position position="534"/>
    </location>
    <ligand>
        <name>Mg(2+)</name>
        <dbReference type="ChEBI" id="CHEBI:18420"/>
    </ligand>
</feature>
<feature type="binding site" evidence="1">
    <location>
        <position position="536"/>
    </location>
    <ligand>
        <name>Mg(2+)</name>
        <dbReference type="ChEBI" id="CHEBI:18420"/>
    </ligand>
</feature>
<feature type="binding site" evidence="1">
    <location>
        <position position="538"/>
    </location>
    <ligand>
        <name>Mg(2+)</name>
        <dbReference type="ChEBI" id="CHEBI:18420"/>
    </ligand>
</feature>
<feature type="binding site" evidence="1">
    <location>
        <position position="1009"/>
    </location>
    <ligand>
        <name>Zn(2+)</name>
        <dbReference type="ChEBI" id="CHEBI:29105"/>
    </ligand>
</feature>
<feature type="binding site" evidence="1">
    <location>
        <position position="1085"/>
    </location>
    <ligand>
        <name>Zn(2+)</name>
        <dbReference type="ChEBI" id="CHEBI:29105"/>
    </ligand>
</feature>
<feature type="binding site" evidence="1">
    <location>
        <position position="1092"/>
    </location>
    <ligand>
        <name>Zn(2+)</name>
        <dbReference type="ChEBI" id="CHEBI:29105"/>
    </ligand>
</feature>
<feature type="binding site" evidence="1">
    <location>
        <position position="1095"/>
    </location>
    <ligand>
        <name>Zn(2+)</name>
        <dbReference type="ChEBI" id="CHEBI:29105"/>
    </ligand>
</feature>
<keyword id="KW-0240">DNA-directed RNA polymerase</keyword>
<keyword id="KW-0460">Magnesium</keyword>
<keyword id="KW-0479">Metal-binding</keyword>
<keyword id="KW-0548">Nucleotidyltransferase</keyword>
<keyword id="KW-1185">Reference proteome</keyword>
<keyword id="KW-0804">Transcription</keyword>
<keyword id="KW-0808">Transferase</keyword>
<keyword id="KW-0862">Zinc</keyword>
<protein>
    <recommendedName>
        <fullName evidence="1">DNA-directed RNA polymerase subunit beta'</fullName>
        <shortName evidence="1">RNAP subunit beta'</shortName>
        <ecNumber evidence="1">2.7.7.6</ecNumber>
    </recommendedName>
    <alternativeName>
        <fullName evidence="1">RNA polymerase subunit beta'</fullName>
    </alternativeName>
    <alternativeName>
        <fullName evidence="1">Transcriptase subunit beta'</fullName>
    </alternativeName>
</protein>